<reference key="1">
    <citation type="journal article" date="1999" name="Nature">
        <title>Genomic sequence comparison of two unrelated isolates of the human gastric pathogen Helicobacter pylori.</title>
        <authorList>
            <person name="Alm R.A."/>
            <person name="Ling L.-S.L."/>
            <person name="Moir D.T."/>
            <person name="King B.L."/>
            <person name="Brown E.D."/>
            <person name="Doig P.C."/>
            <person name="Smith D.R."/>
            <person name="Noonan B."/>
            <person name="Guild B.C."/>
            <person name="deJonge B.L."/>
            <person name="Carmel G."/>
            <person name="Tummino P.J."/>
            <person name="Caruso A."/>
            <person name="Uria-Nickelsen M."/>
            <person name="Mills D.M."/>
            <person name="Ives C."/>
            <person name="Gibson R."/>
            <person name="Merberg D."/>
            <person name="Mills S.D."/>
            <person name="Jiang Q."/>
            <person name="Taylor D.E."/>
            <person name="Vovis G.F."/>
            <person name="Trust T.J."/>
        </authorList>
    </citation>
    <scope>NUCLEOTIDE SEQUENCE [LARGE SCALE GENOMIC DNA]</scope>
    <source>
        <strain>J99 / ATCC 700824</strain>
    </source>
</reference>
<accession>Q9ZJD1</accession>
<name>AN36_HELPJ</name>
<organism>
    <name type="scientific">Helicobacter pylori (strain J99 / ATCC 700824)</name>
    <name type="common">Campylobacter pylori J99</name>
    <dbReference type="NCBI Taxonomy" id="85963"/>
    <lineage>
        <taxon>Bacteria</taxon>
        <taxon>Pseudomonadati</taxon>
        <taxon>Campylobacterota</taxon>
        <taxon>Epsilonproteobacteria</taxon>
        <taxon>Campylobacterales</taxon>
        <taxon>Helicobacteraceae</taxon>
        <taxon>Helicobacter</taxon>
    </lineage>
</organism>
<keyword id="KW-0472">Membrane</keyword>
<keyword id="KW-0812">Transmembrane</keyword>
<keyword id="KW-1133">Transmembrane helix</keyword>
<protein>
    <recommendedName>
        <fullName>36 kDa antigen</fullName>
    </recommendedName>
</protein>
<feature type="chain" id="PRO_0000201860" description="36 kDa antigen">
    <location>
        <begin position="1"/>
        <end position="329"/>
    </location>
</feature>
<feature type="transmembrane region" description="Helical" evidence="1">
    <location>
        <begin position="11"/>
        <end position="31"/>
    </location>
</feature>
<sequence>MSNSMLDKNKAILTGGGALLLGLIVLFYLAYRPKAEVLQGFLEAREYSVSSKVPGRIEKVFVKKGDRIKKGDLVFSISSPELEAKLAQAEAGHKAAKAVSDEVKRGSRDETINSARDVWQAAKSQANLAKETYKRVQDLYDNGVASLQKRDEAYAAYESTKYNESAAYQKYKMALGGASSESKIAAKAKESAALGQVNEVESYLKDVKALAPIDGEVSNVLLSGGELSPKGFPVVLMIDLKDSWLKISVPEKYLNEFKVGKEFEGYIPALKRSAKFRVKYLSVMGDFATWKATNNSNTYDMKSYEVEAIPLEELENFRVGMSVLVTIKP</sequence>
<evidence type="ECO:0000255" key="1"/>
<evidence type="ECO:0000305" key="2"/>
<gene>
    <name type="ordered locus">jhp_1381</name>
</gene>
<dbReference type="EMBL" id="AE001439">
    <property type="protein sequence ID" value="AAD06952.1"/>
    <property type="molecule type" value="Genomic_DNA"/>
</dbReference>
<dbReference type="PIR" id="H71815">
    <property type="entry name" value="H71815"/>
</dbReference>
<dbReference type="RefSeq" id="WP_000071846.1">
    <property type="nucleotide sequence ID" value="NC_000921.1"/>
</dbReference>
<dbReference type="SMR" id="Q9ZJD1"/>
<dbReference type="KEGG" id="hpj:jhp_1381"/>
<dbReference type="eggNOG" id="COG0845">
    <property type="taxonomic scope" value="Bacteria"/>
</dbReference>
<dbReference type="Proteomes" id="UP000000804">
    <property type="component" value="Chromosome"/>
</dbReference>
<dbReference type="GO" id="GO:0016020">
    <property type="term" value="C:membrane"/>
    <property type="evidence" value="ECO:0007669"/>
    <property type="project" value="UniProtKB-SubCell"/>
</dbReference>
<dbReference type="Gene3D" id="2.40.30.170">
    <property type="match status" value="1"/>
</dbReference>
<dbReference type="Gene3D" id="2.40.50.100">
    <property type="match status" value="1"/>
</dbReference>
<dbReference type="InterPro" id="IPR032317">
    <property type="entry name" value="CusB_D23"/>
</dbReference>
<dbReference type="PANTHER" id="PTHR30438:SF1">
    <property type="entry name" value="36 KDA ANTIGEN"/>
    <property type="match status" value="1"/>
</dbReference>
<dbReference type="PANTHER" id="PTHR30438">
    <property type="entry name" value="36 KDA ANTIGEN-RELATED"/>
    <property type="match status" value="1"/>
</dbReference>
<dbReference type="Pfam" id="PF16576">
    <property type="entry name" value="HlyD_D23"/>
    <property type="match status" value="1"/>
</dbReference>
<dbReference type="SUPFAM" id="SSF111369">
    <property type="entry name" value="HlyD-like secretion proteins"/>
    <property type="match status" value="1"/>
</dbReference>
<dbReference type="SUPFAM" id="SSF56954">
    <property type="entry name" value="Outer membrane efflux proteins (OEP)"/>
    <property type="match status" value="1"/>
</dbReference>
<proteinExistence type="inferred from homology"/>
<comment type="subcellular location">
    <subcellularLocation>
        <location evidence="2">Membrane</location>
        <topology evidence="2">Single-pass membrane protein</topology>
    </subcellularLocation>
</comment>
<comment type="similarity">
    <text evidence="2">Belongs to the membrane fusion protein (MFP) (TC 8.A.1) family.</text>
</comment>